<feature type="chain" id="PRO_0000132172" description="Small ribosomal subunit protein uS13">
    <location>
        <begin position="1"/>
        <end position="118"/>
    </location>
</feature>
<feature type="region of interest" description="Disordered" evidence="2">
    <location>
        <begin position="92"/>
        <end position="118"/>
    </location>
</feature>
<feature type="sequence conflict" description="In Ref. 1; AAD00322." evidence="3" ref="1">
    <original>H</original>
    <variation>L</variation>
    <location>
        <position position="95"/>
    </location>
</feature>
<name>RS13_XANCP</name>
<organism>
    <name type="scientific">Xanthomonas campestris pv. campestris (strain ATCC 33913 / DSM 3586 / NCPPB 528 / LMG 568 / P 25)</name>
    <dbReference type="NCBI Taxonomy" id="190485"/>
    <lineage>
        <taxon>Bacteria</taxon>
        <taxon>Pseudomonadati</taxon>
        <taxon>Pseudomonadota</taxon>
        <taxon>Gammaproteobacteria</taxon>
        <taxon>Lysobacterales</taxon>
        <taxon>Lysobacteraceae</taxon>
        <taxon>Xanthomonas</taxon>
    </lineage>
</organism>
<gene>
    <name evidence="1" type="primary">rpsM</name>
    <name type="ordered locus">XCC0916</name>
</gene>
<evidence type="ECO:0000255" key="1">
    <source>
        <dbReference type="HAMAP-Rule" id="MF_01315"/>
    </source>
</evidence>
<evidence type="ECO:0000256" key="2">
    <source>
        <dbReference type="SAM" id="MobiDB-lite"/>
    </source>
</evidence>
<evidence type="ECO:0000305" key="3"/>
<keyword id="KW-1185">Reference proteome</keyword>
<keyword id="KW-0687">Ribonucleoprotein</keyword>
<keyword id="KW-0689">Ribosomal protein</keyword>
<keyword id="KW-0694">RNA-binding</keyword>
<keyword id="KW-0699">rRNA-binding</keyword>
<keyword id="KW-0820">tRNA-binding</keyword>
<dbReference type="EMBL" id="U79735">
    <property type="protein sequence ID" value="AAD00322.2"/>
    <property type="molecule type" value="Genomic_DNA"/>
</dbReference>
<dbReference type="EMBL" id="AE008922">
    <property type="protein sequence ID" value="AAM40226.1"/>
    <property type="molecule type" value="Genomic_DNA"/>
</dbReference>
<dbReference type="RefSeq" id="NP_636302.1">
    <property type="nucleotide sequence ID" value="NC_003902.1"/>
</dbReference>
<dbReference type="RefSeq" id="WP_011036133.1">
    <property type="nucleotide sequence ID" value="NC_003902.1"/>
</dbReference>
<dbReference type="SMR" id="Q9Z3F0"/>
<dbReference type="STRING" id="190485.XCC0916"/>
<dbReference type="EnsemblBacteria" id="AAM40226">
    <property type="protein sequence ID" value="AAM40226"/>
    <property type="gene ID" value="XCC0916"/>
</dbReference>
<dbReference type="KEGG" id="xcc:XCC0916"/>
<dbReference type="PATRIC" id="fig|190485.4.peg.988"/>
<dbReference type="eggNOG" id="COG0099">
    <property type="taxonomic scope" value="Bacteria"/>
</dbReference>
<dbReference type="HOGENOM" id="CLU_103849_1_2_6"/>
<dbReference type="OrthoDB" id="9803610at2"/>
<dbReference type="Proteomes" id="UP000001010">
    <property type="component" value="Chromosome"/>
</dbReference>
<dbReference type="GO" id="GO:0005829">
    <property type="term" value="C:cytosol"/>
    <property type="evidence" value="ECO:0000318"/>
    <property type="project" value="GO_Central"/>
</dbReference>
<dbReference type="GO" id="GO:0015935">
    <property type="term" value="C:small ribosomal subunit"/>
    <property type="evidence" value="ECO:0000318"/>
    <property type="project" value="GO_Central"/>
</dbReference>
<dbReference type="GO" id="GO:0019843">
    <property type="term" value="F:rRNA binding"/>
    <property type="evidence" value="ECO:0007669"/>
    <property type="project" value="UniProtKB-UniRule"/>
</dbReference>
<dbReference type="GO" id="GO:0003735">
    <property type="term" value="F:structural constituent of ribosome"/>
    <property type="evidence" value="ECO:0007669"/>
    <property type="project" value="InterPro"/>
</dbReference>
<dbReference type="GO" id="GO:0000049">
    <property type="term" value="F:tRNA binding"/>
    <property type="evidence" value="ECO:0007669"/>
    <property type="project" value="UniProtKB-UniRule"/>
</dbReference>
<dbReference type="GO" id="GO:0006412">
    <property type="term" value="P:translation"/>
    <property type="evidence" value="ECO:0007669"/>
    <property type="project" value="UniProtKB-UniRule"/>
</dbReference>
<dbReference type="FunFam" id="1.10.8.50:FF:000001">
    <property type="entry name" value="30S ribosomal protein S13"/>
    <property type="match status" value="1"/>
</dbReference>
<dbReference type="FunFam" id="4.10.910.10:FF:000001">
    <property type="entry name" value="30S ribosomal protein S13"/>
    <property type="match status" value="1"/>
</dbReference>
<dbReference type="Gene3D" id="1.10.8.50">
    <property type="match status" value="1"/>
</dbReference>
<dbReference type="Gene3D" id="4.10.910.10">
    <property type="entry name" value="30s ribosomal protein s13, domain 2"/>
    <property type="match status" value="1"/>
</dbReference>
<dbReference type="HAMAP" id="MF_01315">
    <property type="entry name" value="Ribosomal_uS13"/>
    <property type="match status" value="1"/>
</dbReference>
<dbReference type="InterPro" id="IPR027437">
    <property type="entry name" value="Rbsml_uS13_C"/>
</dbReference>
<dbReference type="InterPro" id="IPR001892">
    <property type="entry name" value="Ribosomal_uS13"/>
</dbReference>
<dbReference type="InterPro" id="IPR010979">
    <property type="entry name" value="Ribosomal_uS13-like_H2TH"/>
</dbReference>
<dbReference type="InterPro" id="IPR019980">
    <property type="entry name" value="Ribosomal_uS13_bac-type"/>
</dbReference>
<dbReference type="InterPro" id="IPR018269">
    <property type="entry name" value="Ribosomal_uS13_CS"/>
</dbReference>
<dbReference type="NCBIfam" id="TIGR03631">
    <property type="entry name" value="uS13_bact"/>
    <property type="match status" value="1"/>
</dbReference>
<dbReference type="PANTHER" id="PTHR10871">
    <property type="entry name" value="30S RIBOSOMAL PROTEIN S13/40S RIBOSOMAL PROTEIN S18"/>
    <property type="match status" value="1"/>
</dbReference>
<dbReference type="PANTHER" id="PTHR10871:SF1">
    <property type="entry name" value="SMALL RIBOSOMAL SUBUNIT PROTEIN US13M"/>
    <property type="match status" value="1"/>
</dbReference>
<dbReference type="Pfam" id="PF00416">
    <property type="entry name" value="Ribosomal_S13"/>
    <property type="match status" value="1"/>
</dbReference>
<dbReference type="PIRSF" id="PIRSF002134">
    <property type="entry name" value="Ribosomal_S13"/>
    <property type="match status" value="1"/>
</dbReference>
<dbReference type="SUPFAM" id="SSF46946">
    <property type="entry name" value="S13-like H2TH domain"/>
    <property type="match status" value="1"/>
</dbReference>
<dbReference type="PROSITE" id="PS00646">
    <property type="entry name" value="RIBOSOMAL_S13_1"/>
    <property type="match status" value="1"/>
</dbReference>
<dbReference type="PROSITE" id="PS50159">
    <property type="entry name" value="RIBOSOMAL_S13_2"/>
    <property type="match status" value="1"/>
</dbReference>
<comment type="function">
    <text evidence="1">Located at the top of the head of the 30S subunit, it contacts several helices of the 16S rRNA. In the 70S ribosome it contacts the 23S rRNA (bridge B1a) and protein L5 of the 50S subunit (bridge B1b), connecting the 2 subunits; these bridges are implicated in subunit movement. Contacts the tRNAs in the A and P-sites.</text>
</comment>
<comment type="subunit">
    <text evidence="1">Part of the 30S ribosomal subunit. Forms a loose heterodimer with protein S19. Forms two bridges to the 50S subunit in the 70S ribosome.</text>
</comment>
<comment type="similarity">
    <text evidence="1">Belongs to the universal ribosomal protein uS13 family.</text>
</comment>
<accession>Q9Z3F0</accession>
<sequence length="118" mass="13399">MARIAGVNLPAQKHVWVGLQSIYGIGRTRSKKLCESAGVTSTTKIRDLSEPEIERLRAEVGKYVVEGDLRREIGIAIKRLMDLGCYRGLRHRRGHPLRGQRTRTNARTRKGPRKAIRK</sequence>
<proteinExistence type="inferred from homology"/>
<reference key="1">
    <citation type="journal article" date="2000" name="Biochim. Biophys. Acta">
        <title>Sequence and molecular analysis of the rpoA cluster genes from Xanthomonas campestris pv. campestris.</title>
        <authorList>
            <person name="Lai J.-Y."/>
            <person name="Huang C.-F."/>
            <person name="Tseng Y.-H."/>
            <person name="Yang M.-T."/>
        </authorList>
    </citation>
    <scope>NUCLEOTIDE SEQUENCE [GENOMIC DNA]</scope>
    <source>
        <strain>Xc11</strain>
    </source>
</reference>
<reference key="2">
    <citation type="journal article" date="2002" name="Nature">
        <title>Comparison of the genomes of two Xanthomonas pathogens with differing host specificities.</title>
        <authorList>
            <person name="da Silva A.C.R."/>
            <person name="Ferro J.A."/>
            <person name="Reinach F.C."/>
            <person name="Farah C.S."/>
            <person name="Furlan L.R."/>
            <person name="Quaggio R.B."/>
            <person name="Monteiro-Vitorello C.B."/>
            <person name="Van Sluys M.A."/>
            <person name="Almeida N.F. Jr."/>
            <person name="Alves L.M.C."/>
            <person name="do Amaral A.M."/>
            <person name="Bertolini M.C."/>
            <person name="Camargo L.E.A."/>
            <person name="Camarotte G."/>
            <person name="Cannavan F."/>
            <person name="Cardozo J."/>
            <person name="Chambergo F."/>
            <person name="Ciapina L.P."/>
            <person name="Cicarelli R.M.B."/>
            <person name="Coutinho L.L."/>
            <person name="Cursino-Santos J.R."/>
            <person name="El-Dorry H."/>
            <person name="Faria J.B."/>
            <person name="Ferreira A.J.S."/>
            <person name="Ferreira R.C.C."/>
            <person name="Ferro M.I.T."/>
            <person name="Formighieri E.F."/>
            <person name="Franco M.C."/>
            <person name="Greggio C.C."/>
            <person name="Gruber A."/>
            <person name="Katsuyama A.M."/>
            <person name="Kishi L.T."/>
            <person name="Leite R.P."/>
            <person name="Lemos E.G.M."/>
            <person name="Lemos M.V.F."/>
            <person name="Locali E.C."/>
            <person name="Machado M.A."/>
            <person name="Madeira A.M.B.N."/>
            <person name="Martinez-Rossi N.M."/>
            <person name="Martins E.C."/>
            <person name="Meidanis J."/>
            <person name="Menck C.F.M."/>
            <person name="Miyaki C.Y."/>
            <person name="Moon D.H."/>
            <person name="Moreira L.M."/>
            <person name="Novo M.T.M."/>
            <person name="Okura V.K."/>
            <person name="Oliveira M.C."/>
            <person name="Oliveira V.R."/>
            <person name="Pereira H.A."/>
            <person name="Rossi A."/>
            <person name="Sena J.A.D."/>
            <person name="Silva C."/>
            <person name="de Souza R.F."/>
            <person name="Spinola L.A.F."/>
            <person name="Takita M.A."/>
            <person name="Tamura R.E."/>
            <person name="Teixeira E.C."/>
            <person name="Tezza R.I.D."/>
            <person name="Trindade dos Santos M."/>
            <person name="Truffi D."/>
            <person name="Tsai S.M."/>
            <person name="White F.F."/>
            <person name="Setubal J.C."/>
            <person name="Kitajima J.P."/>
        </authorList>
    </citation>
    <scope>NUCLEOTIDE SEQUENCE [LARGE SCALE GENOMIC DNA]</scope>
    <source>
        <strain>ATCC 33913 / DSM 3586 / NCPPB 528 / LMG 568 / P 25</strain>
    </source>
</reference>
<protein>
    <recommendedName>
        <fullName evidence="1">Small ribosomal subunit protein uS13</fullName>
    </recommendedName>
    <alternativeName>
        <fullName evidence="3">30S ribosomal protein S13</fullName>
    </alternativeName>
</protein>